<gene>
    <name evidence="7" type="primary">MYB4</name>
    <name evidence="9" type="synonym">LTR1</name>
    <name evidence="10" type="ordered locus">Os04g0517100</name>
    <name evidence="8" type="ordered locus">LOC_Os04g43680</name>
    <name evidence="12" type="ORF">OsJ_15470</name>
    <name evidence="11" type="ORF">OSJNBa0073E02.6</name>
</gene>
<accession>Q7XBH4</accession>
<accession>O04140</accession>
<accession>Q0JBQ5</accession>
<accession>Q7XKW3</accession>
<accession>Q8SA75</accession>
<reference key="1">
    <citation type="online journal article" date="1997" name="Plant Gene Register">
        <title>Cloning of a cDNA encoding a novel myb gene highly expressed in anaerobically germinated rice coleoptiles.</title>
        <authorList>
            <person name="Solinas G."/>
            <person name="Valle G."/>
            <person name="Pandolfi D."/>
            <person name="Coraggio I."/>
        </authorList>
        <locator>PGR97-078</locator>
    </citation>
    <scope>NUCLEOTIDE SEQUENCE [MRNA]</scope>
    <source>
        <strain>cv. Arborio</strain>
        <tissue>Coleoptile</tissue>
    </source>
</reference>
<reference key="2">
    <citation type="online journal article" date="1997" name="Plant Gene Register">
        <title>Cloning of a cDNA encoding a novel myb gene highly expressed in cold stressed rice coleoptiles.</title>
        <authorList>
            <person name="Pandolfi D."/>
            <person name="Solinas G."/>
            <person name="Valle G."/>
            <person name="Coraggio I."/>
        </authorList>
        <locator>PGR97-079</locator>
    </citation>
    <scope>NUCLEOTIDE SEQUENCE [MRNA]</scope>
    <scope>INDUCTION</scope>
    <source>
        <strain>cv. Arborio</strain>
        <tissue>Coleoptile</tissue>
    </source>
</reference>
<reference key="3">
    <citation type="submission" date="2003-06" db="EMBL/GenBank/DDBJ databases">
        <title>MYB-family protein acts as a signal transporter in JA induced resistance.</title>
        <authorList>
            <person name="Quanhong Y."/>
            <person name="Rihe P."/>
            <person name="Aisheng X."/>
        </authorList>
    </citation>
    <scope>NUCLEOTIDE SEQUENCE [MRNA]</scope>
</reference>
<reference key="4">
    <citation type="journal article" date="2002" name="Nature">
        <title>Sequence and analysis of rice chromosome 4.</title>
        <authorList>
            <person name="Feng Q."/>
            <person name="Zhang Y."/>
            <person name="Hao P."/>
            <person name="Wang S."/>
            <person name="Fu G."/>
            <person name="Huang Y."/>
            <person name="Li Y."/>
            <person name="Zhu J."/>
            <person name="Liu Y."/>
            <person name="Hu X."/>
            <person name="Jia P."/>
            <person name="Zhang Y."/>
            <person name="Zhao Q."/>
            <person name="Ying K."/>
            <person name="Yu S."/>
            <person name="Tang Y."/>
            <person name="Weng Q."/>
            <person name="Zhang L."/>
            <person name="Lu Y."/>
            <person name="Mu J."/>
            <person name="Lu Y."/>
            <person name="Zhang L.S."/>
            <person name="Yu Z."/>
            <person name="Fan D."/>
            <person name="Liu X."/>
            <person name="Lu T."/>
            <person name="Li C."/>
            <person name="Wu Y."/>
            <person name="Sun T."/>
            <person name="Lei H."/>
            <person name="Li T."/>
            <person name="Hu H."/>
            <person name="Guan J."/>
            <person name="Wu M."/>
            <person name="Zhang R."/>
            <person name="Zhou B."/>
            <person name="Chen Z."/>
            <person name="Chen L."/>
            <person name="Jin Z."/>
            <person name="Wang R."/>
            <person name="Yin H."/>
            <person name="Cai Z."/>
            <person name="Ren S."/>
            <person name="Lv G."/>
            <person name="Gu W."/>
            <person name="Zhu G."/>
            <person name="Tu Y."/>
            <person name="Jia J."/>
            <person name="Zhang Y."/>
            <person name="Chen J."/>
            <person name="Kang H."/>
            <person name="Chen X."/>
            <person name="Shao C."/>
            <person name="Sun Y."/>
            <person name="Hu Q."/>
            <person name="Zhang X."/>
            <person name="Zhang W."/>
            <person name="Wang L."/>
            <person name="Ding C."/>
            <person name="Sheng H."/>
            <person name="Gu J."/>
            <person name="Chen S."/>
            <person name="Ni L."/>
            <person name="Zhu F."/>
            <person name="Chen W."/>
            <person name="Lan L."/>
            <person name="Lai Y."/>
            <person name="Cheng Z."/>
            <person name="Gu M."/>
            <person name="Jiang J."/>
            <person name="Li J."/>
            <person name="Hong G."/>
            <person name="Xue Y."/>
            <person name="Han B."/>
        </authorList>
    </citation>
    <scope>NUCLEOTIDE SEQUENCE [LARGE SCALE GENOMIC DNA]</scope>
    <source>
        <strain>cv. Nipponbare</strain>
    </source>
</reference>
<reference key="5">
    <citation type="journal article" date="2005" name="Nature">
        <title>The map-based sequence of the rice genome.</title>
        <authorList>
            <consortium name="International rice genome sequencing project (IRGSP)"/>
        </authorList>
    </citation>
    <scope>NUCLEOTIDE SEQUENCE [LARGE SCALE GENOMIC DNA]</scope>
    <source>
        <strain>cv. Nipponbare</strain>
    </source>
</reference>
<reference key="6">
    <citation type="journal article" date="2008" name="Nucleic Acids Res.">
        <title>The rice annotation project database (RAP-DB): 2008 update.</title>
        <authorList>
            <consortium name="The rice annotation project (RAP)"/>
        </authorList>
    </citation>
    <scope>GENOME REANNOTATION</scope>
    <source>
        <strain>cv. Nipponbare</strain>
    </source>
</reference>
<reference key="7">
    <citation type="journal article" date="2013" name="Rice">
        <title>Improvement of the Oryza sativa Nipponbare reference genome using next generation sequence and optical map data.</title>
        <authorList>
            <person name="Kawahara Y."/>
            <person name="de la Bastide M."/>
            <person name="Hamilton J.P."/>
            <person name="Kanamori H."/>
            <person name="McCombie W.R."/>
            <person name="Ouyang S."/>
            <person name="Schwartz D.C."/>
            <person name="Tanaka T."/>
            <person name="Wu J."/>
            <person name="Zhou S."/>
            <person name="Childs K.L."/>
            <person name="Davidson R.M."/>
            <person name="Lin H."/>
            <person name="Quesada-Ocampo L."/>
            <person name="Vaillancourt B."/>
            <person name="Sakai H."/>
            <person name="Lee S.S."/>
            <person name="Kim J."/>
            <person name="Numa H."/>
            <person name="Itoh T."/>
            <person name="Buell C.R."/>
            <person name="Matsumoto T."/>
        </authorList>
    </citation>
    <scope>GENOME REANNOTATION</scope>
    <source>
        <strain>cv. Nipponbare</strain>
    </source>
</reference>
<reference key="8">
    <citation type="journal article" date="2005" name="PLoS Biol.">
        <title>The genomes of Oryza sativa: a history of duplications.</title>
        <authorList>
            <person name="Yu J."/>
            <person name="Wang J."/>
            <person name="Lin W."/>
            <person name="Li S."/>
            <person name="Li H."/>
            <person name="Zhou J."/>
            <person name="Ni P."/>
            <person name="Dong W."/>
            <person name="Hu S."/>
            <person name="Zeng C."/>
            <person name="Zhang J."/>
            <person name="Zhang Y."/>
            <person name="Li R."/>
            <person name="Xu Z."/>
            <person name="Li S."/>
            <person name="Li X."/>
            <person name="Zheng H."/>
            <person name="Cong L."/>
            <person name="Lin L."/>
            <person name="Yin J."/>
            <person name="Geng J."/>
            <person name="Li G."/>
            <person name="Shi J."/>
            <person name="Liu J."/>
            <person name="Lv H."/>
            <person name="Li J."/>
            <person name="Wang J."/>
            <person name="Deng Y."/>
            <person name="Ran L."/>
            <person name="Shi X."/>
            <person name="Wang X."/>
            <person name="Wu Q."/>
            <person name="Li C."/>
            <person name="Ren X."/>
            <person name="Wang J."/>
            <person name="Wang X."/>
            <person name="Li D."/>
            <person name="Liu D."/>
            <person name="Zhang X."/>
            <person name="Ji Z."/>
            <person name="Zhao W."/>
            <person name="Sun Y."/>
            <person name="Zhang Z."/>
            <person name="Bao J."/>
            <person name="Han Y."/>
            <person name="Dong L."/>
            <person name="Ji J."/>
            <person name="Chen P."/>
            <person name="Wu S."/>
            <person name="Liu J."/>
            <person name="Xiao Y."/>
            <person name="Bu D."/>
            <person name="Tan J."/>
            <person name="Yang L."/>
            <person name="Ye C."/>
            <person name="Zhang J."/>
            <person name="Xu J."/>
            <person name="Zhou Y."/>
            <person name="Yu Y."/>
            <person name="Zhang B."/>
            <person name="Zhuang S."/>
            <person name="Wei H."/>
            <person name="Liu B."/>
            <person name="Lei M."/>
            <person name="Yu H."/>
            <person name="Li Y."/>
            <person name="Xu H."/>
            <person name="Wei S."/>
            <person name="He X."/>
            <person name="Fang L."/>
            <person name="Zhang Z."/>
            <person name="Zhang Y."/>
            <person name="Huang X."/>
            <person name="Su Z."/>
            <person name="Tong W."/>
            <person name="Li J."/>
            <person name="Tong Z."/>
            <person name="Li S."/>
            <person name="Ye J."/>
            <person name="Wang L."/>
            <person name="Fang L."/>
            <person name="Lei T."/>
            <person name="Chen C.-S."/>
            <person name="Chen H.-C."/>
            <person name="Xu Z."/>
            <person name="Li H."/>
            <person name="Huang H."/>
            <person name="Zhang F."/>
            <person name="Xu H."/>
            <person name="Li N."/>
            <person name="Zhao C."/>
            <person name="Li S."/>
            <person name="Dong L."/>
            <person name="Huang Y."/>
            <person name="Li L."/>
            <person name="Xi Y."/>
            <person name="Qi Q."/>
            <person name="Li W."/>
            <person name="Zhang B."/>
            <person name="Hu W."/>
            <person name="Zhang Y."/>
            <person name="Tian X."/>
            <person name="Jiao Y."/>
            <person name="Liang X."/>
            <person name="Jin J."/>
            <person name="Gao L."/>
            <person name="Zheng W."/>
            <person name="Hao B."/>
            <person name="Liu S.-M."/>
            <person name="Wang W."/>
            <person name="Yuan L."/>
            <person name="Cao M."/>
            <person name="McDermott J."/>
            <person name="Samudrala R."/>
            <person name="Wang J."/>
            <person name="Wong G.K.-S."/>
            <person name="Yang H."/>
        </authorList>
    </citation>
    <scope>NUCLEOTIDE SEQUENCE [LARGE SCALE GENOMIC DNA]</scope>
    <source>
        <strain>cv. Nipponbare</strain>
    </source>
</reference>
<reference key="9">
    <citation type="submission" date="2002-01" db="EMBL/GenBank/DDBJ databases">
        <authorList>
            <person name="Yao Q."/>
            <person name="Peng R."/>
            <person name="Xiong A."/>
            <person name="Li X."/>
            <person name="Fan H."/>
        </authorList>
    </citation>
    <scope>NUCLEOTIDE SEQUENCE [MRNA] OF 1-159</scope>
</reference>
<reference key="10">
    <citation type="journal article" date="2004" name="Plant J.">
        <title>Overexpression of the rice Osmyb4 gene increases chilling and freezing tolerance of Arabidopsis thaliana plants.</title>
        <authorList>
            <person name="Vannini C."/>
            <person name="Locatelli F."/>
            <person name="Bracale M."/>
            <person name="Magnani E."/>
            <person name="Marsoni M."/>
            <person name="Osnato M."/>
            <person name="Mattana M."/>
            <person name="Baldoni E."/>
            <person name="Coraggio I."/>
        </authorList>
    </citation>
    <scope>FUNCTION</scope>
    <scope>INDUCTION</scope>
</reference>
<reference key="11">
    <citation type="journal article" date="2010" name="Plant Cell Environ.">
        <title>Supra-optimal expression of the cold-regulated OsMyb4 transcription factor in transgenic rice changes the complexity of transcriptional network with major effects on stress tolerance and panicle development.</title>
        <authorList>
            <person name="Park M.R."/>
            <person name="Yun K.Y."/>
            <person name="Mohanty B."/>
            <person name="Herath V."/>
            <person name="Xu F."/>
            <person name="Wijaya E."/>
            <person name="Bajic V.B."/>
            <person name="Yun S.J."/>
            <person name="De Los Reyes B.G."/>
        </authorList>
    </citation>
    <scope>FUNCTION</scope>
    <scope>INDUCTION</scope>
</reference>
<reference key="12">
    <citation type="journal article" date="2012" name="J. Appl. Genet.">
        <title>The rice Osmyb4 gene enhances tolerance to frost and improves germination under unfavourable conditions in transgenic barley plants.</title>
        <authorList>
            <person name="Soltesz A."/>
            <person name="Vagujfalvi A."/>
            <person name="Rizza F."/>
            <person name="Kerepesi I."/>
            <person name="Galiba G."/>
            <person name="Cattivelli L."/>
            <person name="Coraggio I."/>
            <person name="Crosatti C."/>
        </authorList>
    </citation>
    <scope>FUNCTION</scope>
</reference>
<sequence length="257" mass="27914">MGRAPCCEKMGLKKGPWTPEEDKVLVAHIQRHGHGNWRALPKQAGLLRCGKSCRLRWINYLRPDIKRGNFSKEEEDTIIHLHELLGNRWSAIAARLPGRTDNEIKNVWHTHLKKRLDAPAQGGHVAASGGKKHKKPKSAKKPAAAAAAPPASPERSASSSVTESSMASSVAEEHGNAGISSASASVCAKEESSFTSASEEFQIDDSFWSETLSMPLDGYDVSMEPGDAFVAPPSADDMDYWLGVFMESGEAQDLPQI</sequence>
<organism>
    <name type="scientific">Oryza sativa subsp. japonica</name>
    <name type="common">Rice</name>
    <dbReference type="NCBI Taxonomy" id="39947"/>
    <lineage>
        <taxon>Eukaryota</taxon>
        <taxon>Viridiplantae</taxon>
        <taxon>Streptophyta</taxon>
        <taxon>Embryophyta</taxon>
        <taxon>Tracheophyta</taxon>
        <taxon>Spermatophyta</taxon>
        <taxon>Magnoliopsida</taxon>
        <taxon>Liliopsida</taxon>
        <taxon>Poales</taxon>
        <taxon>Poaceae</taxon>
        <taxon>BOP clade</taxon>
        <taxon>Oryzoideae</taxon>
        <taxon>Oryzeae</taxon>
        <taxon>Oryzinae</taxon>
        <taxon>Oryza</taxon>
        <taxon>Oryza sativa</taxon>
    </lineage>
</organism>
<name>MYB4_ORYSJ</name>
<evidence type="ECO:0000255" key="1">
    <source>
        <dbReference type="PROSITE-ProRule" id="PRU00625"/>
    </source>
</evidence>
<evidence type="ECO:0000256" key="2">
    <source>
        <dbReference type="SAM" id="MobiDB-lite"/>
    </source>
</evidence>
<evidence type="ECO:0000269" key="3">
    <source>
    </source>
</evidence>
<evidence type="ECO:0000269" key="4">
    <source>
    </source>
</evidence>
<evidence type="ECO:0000269" key="5">
    <source>
    </source>
</evidence>
<evidence type="ECO:0000269" key="6">
    <source ref="2"/>
</evidence>
<evidence type="ECO:0000303" key="7">
    <source>
    </source>
</evidence>
<evidence type="ECO:0000305" key="8"/>
<evidence type="ECO:0000312" key="9">
    <source>
        <dbReference type="EMBL" id="AAP92750.1"/>
    </source>
</evidence>
<evidence type="ECO:0000312" key="10">
    <source>
        <dbReference type="EMBL" id="BAF15232.1"/>
    </source>
</evidence>
<evidence type="ECO:0000312" key="11">
    <source>
        <dbReference type="EMBL" id="CAE05446.2"/>
    </source>
</evidence>
<evidence type="ECO:0000312" key="12">
    <source>
        <dbReference type="EMBL" id="EAZ31348.1"/>
    </source>
</evidence>
<protein>
    <recommendedName>
        <fullName evidence="8">Transcription factor MYB4</fullName>
    </recommendedName>
    <alternativeName>
        <fullName evidence="8">Myb-related protein 4</fullName>
        <shortName evidence="7">OsMyb4</shortName>
    </alternativeName>
    <alternativeName>
        <fullName evidence="9">Transcription factor RLTR1</fullName>
    </alternativeName>
</protein>
<comment type="function">
    <text evidence="3 4 5">Transcriptional activator involved in cold stress response (PubMed:14675437, PubMed:20807373, PubMed:22246661). Regulates positively the expression of genes involved in reactive oxygen species (ROS) scavenging such as peroxidase and superoxide dismutase during cold stress. Transactivates a complex gene network that have major effects on stress tolerance and panicle development (PubMed:20807373).</text>
</comment>
<comment type="subcellular location">
    <subcellularLocation>
        <location evidence="1">Nucleus</location>
    </subcellularLocation>
</comment>
<comment type="induction">
    <text evidence="3 4 6">By cold stress.</text>
</comment>
<comment type="miscellaneous">
    <text evidence="3 5">Arabidopsis plants overexpressing MYB4 show dwarf phenotype and increased tolerance to cold and freezing (PubMed:14675437). Barley plants overexpressing MYB4 show a slight retarded growth and increased tolerance to cold and freezing (PubMed:22246661).</text>
</comment>
<comment type="sequence caution" evidence="8">
    <conflict type="frameshift">
        <sequence resource="EMBL-CDS" id="AAL78372"/>
    </conflict>
</comment>
<feature type="chain" id="PRO_0000197080" description="Transcription factor MYB4">
    <location>
        <begin position="1"/>
        <end position="257"/>
    </location>
</feature>
<feature type="domain" description="HTH myb-type 1" evidence="1">
    <location>
        <begin position="9"/>
        <end position="61"/>
    </location>
</feature>
<feature type="domain" description="HTH myb-type 2" evidence="1">
    <location>
        <begin position="62"/>
        <end position="116"/>
    </location>
</feature>
<feature type="DNA-binding region" description="H-T-H motif" evidence="1">
    <location>
        <begin position="37"/>
        <end position="61"/>
    </location>
</feature>
<feature type="DNA-binding region" description="H-T-H motif" evidence="1">
    <location>
        <begin position="89"/>
        <end position="112"/>
    </location>
</feature>
<feature type="region of interest" description="Disordered" evidence="2">
    <location>
        <begin position="115"/>
        <end position="179"/>
    </location>
</feature>
<feature type="compositionally biased region" description="Basic residues" evidence="2">
    <location>
        <begin position="130"/>
        <end position="140"/>
    </location>
</feature>
<feature type="compositionally biased region" description="Low complexity" evidence="2">
    <location>
        <begin position="141"/>
        <end position="170"/>
    </location>
</feature>
<feature type="sequence conflict" description="In Ref. 9; AAL78372." evidence="8" ref="9">
    <original>SAKKPAAAAAAPPASPERSASS</original>
    <variation>TRRSQPPPPPGRGVAERSARRR</variation>
    <location>
        <begin position="138"/>
        <end position="159"/>
    </location>
</feature>
<feature type="sequence conflict" description="In Ref. 3; AAP92750." evidence="8" ref="3">
    <original>S</original>
    <variation>L</variation>
    <location>
        <position position="152"/>
    </location>
</feature>
<keyword id="KW-0238">DNA-binding</keyword>
<keyword id="KW-0539">Nucleus</keyword>
<keyword id="KW-1185">Reference proteome</keyword>
<keyword id="KW-0677">Repeat</keyword>
<keyword id="KW-0346">Stress response</keyword>
<keyword id="KW-0804">Transcription</keyword>
<keyword id="KW-0805">Transcription regulation</keyword>
<proteinExistence type="evidence at transcript level"/>
<dbReference type="EMBL" id="Y11414">
    <property type="protein sequence ID" value="CAA72217.1"/>
    <property type="molecule type" value="mRNA"/>
</dbReference>
<dbReference type="EMBL" id="AY323484">
    <property type="protein sequence ID" value="AAP92750.1"/>
    <property type="molecule type" value="mRNA"/>
</dbReference>
<dbReference type="EMBL" id="AL731616">
    <property type="protein sequence ID" value="CAE05446.2"/>
    <property type="molecule type" value="Genomic_DNA"/>
</dbReference>
<dbReference type="EMBL" id="AP008210">
    <property type="protein sequence ID" value="BAF15232.1"/>
    <property type="molecule type" value="Genomic_DNA"/>
</dbReference>
<dbReference type="EMBL" id="AP014960">
    <property type="status" value="NOT_ANNOTATED_CDS"/>
    <property type="molecule type" value="Genomic_DNA"/>
</dbReference>
<dbReference type="EMBL" id="CM000141">
    <property type="protein sequence ID" value="EAZ31348.1"/>
    <property type="molecule type" value="Genomic_DNA"/>
</dbReference>
<dbReference type="EMBL" id="AF467733">
    <property type="protein sequence ID" value="AAL78372.1"/>
    <property type="status" value="ALT_FRAME"/>
    <property type="molecule type" value="mRNA"/>
</dbReference>
<dbReference type="PIR" id="T03825">
    <property type="entry name" value="T03825"/>
</dbReference>
<dbReference type="RefSeq" id="XP_015633465.1">
    <property type="nucleotide sequence ID" value="XM_015777979.1"/>
</dbReference>
<dbReference type="SMR" id="Q7XBH4"/>
<dbReference type="FunCoup" id="Q7XBH4">
    <property type="interactions" value="340"/>
</dbReference>
<dbReference type="STRING" id="39947.Q7XBH4"/>
<dbReference type="PaxDb" id="39947-Q7XBH4"/>
<dbReference type="EnsemblPlants" id="Os04t0517100-02">
    <property type="protein sequence ID" value="Os04t0517100-02"/>
    <property type="gene ID" value="Os04g0517100"/>
</dbReference>
<dbReference type="Gramene" id="Os04t0517100-02">
    <property type="protein sequence ID" value="Os04t0517100-02"/>
    <property type="gene ID" value="Os04g0517100"/>
</dbReference>
<dbReference type="KEGG" id="dosa:Os04g0517100"/>
<dbReference type="eggNOG" id="KOG0048">
    <property type="taxonomic scope" value="Eukaryota"/>
</dbReference>
<dbReference type="HOGENOM" id="CLU_028567_6_4_1"/>
<dbReference type="InParanoid" id="Q7XBH4"/>
<dbReference type="OrthoDB" id="2143914at2759"/>
<dbReference type="Proteomes" id="UP000000763">
    <property type="component" value="Chromosome 4"/>
</dbReference>
<dbReference type="Proteomes" id="UP000007752">
    <property type="component" value="Chromosome 4"/>
</dbReference>
<dbReference type="Proteomes" id="UP000059680">
    <property type="component" value="Chromosome 4"/>
</dbReference>
<dbReference type="ExpressionAtlas" id="Q7XBH4">
    <property type="expression patterns" value="baseline and differential"/>
</dbReference>
<dbReference type="GO" id="GO:0005634">
    <property type="term" value="C:nucleus"/>
    <property type="evidence" value="ECO:0007669"/>
    <property type="project" value="UniProtKB-SubCell"/>
</dbReference>
<dbReference type="GO" id="GO:0003677">
    <property type="term" value="F:DNA binding"/>
    <property type="evidence" value="ECO:0007669"/>
    <property type="project" value="UniProtKB-KW"/>
</dbReference>
<dbReference type="GO" id="GO:0045893">
    <property type="term" value="P:positive regulation of DNA-templated transcription"/>
    <property type="evidence" value="ECO:0000314"/>
    <property type="project" value="UniProtKB"/>
</dbReference>
<dbReference type="GO" id="GO:0009409">
    <property type="term" value="P:response to cold"/>
    <property type="evidence" value="ECO:0000315"/>
    <property type="project" value="UniProtKB"/>
</dbReference>
<dbReference type="CDD" id="cd00167">
    <property type="entry name" value="SANT"/>
    <property type="match status" value="2"/>
</dbReference>
<dbReference type="FunFam" id="1.10.10.60:FF:000001">
    <property type="entry name" value="MYB-related transcription factor"/>
    <property type="match status" value="1"/>
</dbReference>
<dbReference type="FunFam" id="1.10.10.60:FF:000316">
    <property type="entry name" value="Transcription factor MYB15"/>
    <property type="match status" value="1"/>
</dbReference>
<dbReference type="Gene3D" id="1.10.10.60">
    <property type="entry name" value="Homeodomain-like"/>
    <property type="match status" value="2"/>
</dbReference>
<dbReference type="InterPro" id="IPR009057">
    <property type="entry name" value="Homeodomain-like_sf"/>
</dbReference>
<dbReference type="InterPro" id="IPR017930">
    <property type="entry name" value="Myb_dom"/>
</dbReference>
<dbReference type="InterPro" id="IPR015495">
    <property type="entry name" value="Myb_TF_plants"/>
</dbReference>
<dbReference type="InterPro" id="IPR001005">
    <property type="entry name" value="SANT/Myb"/>
</dbReference>
<dbReference type="PANTHER" id="PTHR10641">
    <property type="entry name" value="MYB FAMILY TRANSCRIPTION FACTOR"/>
    <property type="match status" value="1"/>
</dbReference>
<dbReference type="PANTHER" id="PTHR10641:SF1406">
    <property type="entry name" value="TRANSCRIPTION FACTOR MYB15"/>
    <property type="match status" value="1"/>
</dbReference>
<dbReference type="Pfam" id="PF00249">
    <property type="entry name" value="Myb_DNA-binding"/>
    <property type="match status" value="2"/>
</dbReference>
<dbReference type="SMART" id="SM00717">
    <property type="entry name" value="SANT"/>
    <property type="match status" value="2"/>
</dbReference>
<dbReference type="SUPFAM" id="SSF46689">
    <property type="entry name" value="Homeodomain-like"/>
    <property type="match status" value="1"/>
</dbReference>
<dbReference type="PROSITE" id="PS51294">
    <property type="entry name" value="HTH_MYB"/>
    <property type="match status" value="2"/>
</dbReference>